<protein>
    <recommendedName>
        <fullName evidence="1">Methylthioribulose-1-phosphate dehydratase</fullName>
        <shortName evidence="1">MTRu-1-P dehydratase</shortName>
        <ecNumber evidence="1">4.2.1.109</ecNumber>
    </recommendedName>
</protein>
<reference key="1">
    <citation type="journal article" date="2000" name="Nature">
        <title>Complete genome sequence of Pseudomonas aeruginosa PAO1, an opportunistic pathogen.</title>
        <authorList>
            <person name="Stover C.K."/>
            <person name="Pham X.-Q.T."/>
            <person name="Erwin A.L."/>
            <person name="Mizoguchi S.D."/>
            <person name="Warrener P."/>
            <person name="Hickey M.J."/>
            <person name="Brinkman F.S.L."/>
            <person name="Hufnagle W.O."/>
            <person name="Kowalik D.J."/>
            <person name="Lagrou M."/>
            <person name="Garber R.L."/>
            <person name="Goltry L."/>
            <person name="Tolentino E."/>
            <person name="Westbrock-Wadman S."/>
            <person name="Yuan Y."/>
            <person name="Brody L.L."/>
            <person name="Coulter S.N."/>
            <person name="Folger K.R."/>
            <person name="Kas A."/>
            <person name="Larbig K."/>
            <person name="Lim R.M."/>
            <person name="Smith K.A."/>
            <person name="Spencer D.H."/>
            <person name="Wong G.K.-S."/>
            <person name="Wu Z."/>
            <person name="Paulsen I.T."/>
            <person name="Reizer J."/>
            <person name="Saier M.H. Jr."/>
            <person name="Hancock R.E.W."/>
            <person name="Lory S."/>
            <person name="Olson M.V."/>
        </authorList>
    </citation>
    <scope>NUCLEOTIDE SEQUENCE [LARGE SCALE GENOMIC DNA]</scope>
    <source>
        <strain>ATCC 15692 / DSM 22644 / CIP 104116 / JCM 14847 / LMG 12228 / 1C / PRS 101 / PAO1</strain>
    </source>
</reference>
<keyword id="KW-0028">Amino-acid biosynthesis</keyword>
<keyword id="KW-0456">Lyase</keyword>
<keyword id="KW-0479">Metal-binding</keyword>
<keyword id="KW-0486">Methionine biosynthesis</keyword>
<keyword id="KW-1185">Reference proteome</keyword>
<keyword id="KW-0862">Zinc</keyword>
<evidence type="ECO:0000255" key="1">
    <source>
        <dbReference type="HAMAP-Rule" id="MF_01677"/>
    </source>
</evidence>
<organism>
    <name type="scientific">Pseudomonas aeruginosa (strain ATCC 15692 / DSM 22644 / CIP 104116 / JCM 14847 / LMG 12228 / 1C / PRS 101 / PAO1)</name>
    <dbReference type="NCBI Taxonomy" id="208964"/>
    <lineage>
        <taxon>Bacteria</taxon>
        <taxon>Pseudomonadati</taxon>
        <taxon>Pseudomonadota</taxon>
        <taxon>Gammaproteobacteria</taxon>
        <taxon>Pseudomonadales</taxon>
        <taxon>Pseudomonadaceae</taxon>
        <taxon>Pseudomonas</taxon>
    </lineage>
</organism>
<name>MTNB_PSEAE</name>
<dbReference type="EC" id="4.2.1.109" evidence="1"/>
<dbReference type="EMBL" id="AE004091">
    <property type="protein sequence ID" value="AAG05072.1"/>
    <property type="molecule type" value="Genomic_DNA"/>
</dbReference>
<dbReference type="PIR" id="D83436">
    <property type="entry name" value="D83436"/>
</dbReference>
<dbReference type="RefSeq" id="NP_250374.1">
    <property type="nucleotide sequence ID" value="NC_002516.2"/>
</dbReference>
<dbReference type="RefSeq" id="WP_003103182.1">
    <property type="nucleotide sequence ID" value="NZ_QZGE01000003.1"/>
</dbReference>
<dbReference type="SMR" id="Q9I342"/>
<dbReference type="FunCoup" id="Q9I342">
    <property type="interactions" value="542"/>
</dbReference>
<dbReference type="STRING" id="208964.PA1683"/>
<dbReference type="PaxDb" id="208964-PA1683"/>
<dbReference type="DNASU" id="877627"/>
<dbReference type="GeneID" id="877627"/>
<dbReference type="KEGG" id="pae:PA1683"/>
<dbReference type="PATRIC" id="fig|208964.12.peg.1744"/>
<dbReference type="PseudoCAP" id="PA1683"/>
<dbReference type="HOGENOM" id="CLU_006033_4_1_6"/>
<dbReference type="InParanoid" id="Q9I342"/>
<dbReference type="OrthoDB" id="9805559at2"/>
<dbReference type="PhylomeDB" id="Q9I342"/>
<dbReference type="BioCyc" id="PAER208964:G1FZ6-1714-MONOMER"/>
<dbReference type="UniPathway" id="UPA00904">
    <property type="reaction ID" value="UER00875"/>
</dbReference>
<dbReference type="Proteomes" id="UP000002438">
    <property type="component" value="Chromosome"/>
</dbReference>
<dbReference type="GO" id="GO:0005737">
    <property type="term" value="C:cytoplasm"/>
    <property type="evidence" value="ECO:0000318"/>
    <property type="project" value="GO_Central"/>
</dbReference>
<dbReference type="GO" id="GO:0046570">
    <property type="term" value="F:methylthioribulose 1-phosphate dehydratase activity"/>
    <property type="evidence" value="ECO:0000318"/>
    <property type="project" value="GO_Central"/>
</dbReference>
<dbReference type="GO" id="GO:0008270">
    <property type="term" value="F:zinc ion binding"/>
    <property type="evidence" value="ECO:0007669"/>
    <property type="project" value="UniProtKB-UniRule"/>
</dbReference>
<dbReference type="GO" id="GO:0019509">
    <property type="term" value="P:L-methionine salvage from methylthioadenosine"/>
    <property type="evidence" value="ECO:0000318"/>
    <property type="project" value="GO_Central"/>
</dbReference>
<dbReference type="GO" id="GO:0005996">
    <property type="term" value="P:monosaccharide metabolic process"/>
    <property type="evidence" value="ECO:0007669"/>
    <property type="project" value="UniProtKB-ARBA"/>
</dbReference>
<dbReference type="FunFam" id="3.40.225.10:FF:000007">
    <property type="entry name" value="Methylthioribulose-1-phosphate dehydratase"/>
    <property type="match status" value="1"/>
</dbReference>
<dbReference type="Gene3D" id="3.40.225.10">
    <property type="entry name" value="Class II aldolase/adducin N-terminal domain"/>
    <property type="match status" value="1"/>
</dbReference>
<dbReference type="HAMAP" id="MF_01677">
    <property type="entry name" value="Salvage_MtnB"/>
    <property type="match status" value="1"/>
</dbReference>
<dbReference type="InterPro" id="IPR001303">
    <property type="entry name" value="Aldolase_II/adducin_N"/>
</dbReference>
<dbReference type="InterPro" id="IPR036409">
    <property type="entry name" value="Aldolase_II/adducin_N_sf"/>
</dbReference>
<dbReference type="InterPro" id="IPR017714">
    <property type="entry name" value="MethylthioRu-1-P_deHdtase_MtnB"/>
</dbReference>
<dbReference type="NCBIfam" id="NF006672">
    <property type="entry name" value="PRK09220.1"/>
    <property type="match status" value="1"/>
</dbReference>
<dbReference type="NCBIfam" id="TIGR03328">
    <property type="entry name" value="salvage_mtnB"/>
    <property type="match status" value="1"/>
</dbReference>
<dbReference type="PANTHER" id="PTHR10640">
    <property type="entry name" value="METHYLTHIORIBULOSE-1-PHOSPHATE DEHYDRATASE"/>
    <property type="match status" value="1"/>
</dbReference>
<dbReference type="PANTHER" id="PTHR10640:SF7">
    <property type="entry name" value="METHYLTHIORIBULOSE-1-PHOSPHATE DEHYDRATASE"/>
    <property type="match status" value="1"/>
</dbReference>
<dbReference type="Pfam" id="PF00596">
    <property type="entry name" value="Aldolase_II"/>
    <property type="match status" value="1"/>
</dbReference>
<dbReference type="SMART" id="SM01007">
    <property type="entry name" value="Aldolase_II"/>
    <property type="match status" value="1"/>
</dbReference>
<dbReference type="SUPFAM" id="SSF53639">
    <property type="entry name" value="AraD/HMP-PK domain-like"/>
    <property type="match status" value="1"/>
</dbReference>
<accession>Q9I342</accession>
<feature type="chain" id="PRO_0000357097" description="Methylthioribulose-1-phosphate dehydratase">
    <location>
        <begin position="1"/>
        <end position="205"/>
    </location>
</feature>
<feature type="binding site" evidence="1">
    <location>
        <position position="96"/>
    </location>
    <ligand>
        <name>Zn(2+)</name>
        <dbReference type="ChEBI" id="CHEBI:29105"/>
    </ligand>
</feature>
<feature type="binding site" evidence="1">
    <location>
        <position position="98"/>
    </location>
    <ligand>
        <name>Zn(2+)</name>
        <dbReference type="ChEBI" id="CHEBI:29105"/>
    </ligand>
</feature>
<proteinExistence type="inferred from homology"/>
<comment type="function">
    <text evidence="1">Catalyzes the dehydration of methylthioribulose-1-phosphate (MTRu-1-P) into 2,3-diketo-5-methylthiopentyl-1-phosphate (DK-MTP-1-P).</text>
</comment>
<comment type="catalytic activity">
    <reaction evidence="1">
        <text>5-(methylsulfanyl)-D-ribulose 1-phosphate = 5-methylsulfanyl-2,3-dioxopentyl phosphate + H2O</text>
        <dbReference type="Rhea" id="RHEA:15549"/>
        <dbReference type="ChEBI" id="CHEBI:15377"/>
        <dbReference type="ChEBI" id="CHEBI:58548"/>
        <dbReference type="ChEBI" id="CHEBI:58828"/>
        <dbReference type="EC" id="4.2.1.109"/>
    </reaction>
</comment>
<comment type="cofactor">
    <cofactor evidence="1">
        <name>Zn(2+)</name>
        <dbReference type="ChEBI" id="CHEBI:29105"/>
    </cofactor>
    <text evidence="1">Binds 1 zinc ion per subunit.</text>
</comment>
<comment type="pathway">
    <text evidence="1">Amino-acid biosynthesis; L-methionine biosynthesis via salvage pathway; L-methionine from S-methyl-5-thio-alpha-D-ribose 1-phosphate: step 2/6.</text>
</comment>
<comment type="similarity">
    <text evidence="1">Belongs to the aldolase class II family. MtnB subfamily.</text>
</comment>
<sequence>MNDNREQLTQQIIDAGRFLYGRGWSPATSSNYSARLDEQRALLTVSGKHKGQLGFDDVLATDLAGNSLEPGKKPSAETLLHTQLYAWNPAIGAVLHTHSVNATVLSRLVRGDRLVLQDYELQKAFAGVTTHEGQVEVPIFDNDQDIARLASRVQPWLEAHPHCPGYLIRGHGLYTWGARMSDALRQVEAFEFLFECELKVLSLSR</sequence>
<gene>
    <name evidence="1" type="primary">mtnB</name>
    <name type="ordered locus">PA1683</name>
</gene>